<dbReference type="EC" id="1.11.1.21" evidence="1"/>
<dbReference type="EMBL" id="CP000958">
    <property type="protein sequence ID" value="ACA89872.1"/>
    <property type="molecule type" value="Genomic_DNA"/>
</dbReference>
<dbReference type="SMR" id="B1JVZ2"/>
<dbReference type="GeneID" id="83047494"/>
<dbReference type="KEGG" id="bcm:Bcenmc03_0694"/>
<dbReference type="HOGENOM" id="CLU_025424_2_0_4"/>
<dbReference type="Proteomes" id="UP000002169">
    <property type="component" value="Chromosome 1"/>
</dbReference>
<dbReference type="GO" id="GO:0005829">
    <property type="term" value="C:cytosol"/>
    <property type="evidence" value="ECO:0007669"/>
    <property type="project" value="TreeGrafter"/>
</dbReference>
<dbReference type="GO" id="GO:0004096">
    <property type="term" value="F:catalase activity"/>
    <property type="evidence" value="ECO:0007669"/>
    <property type="project" value="UniProtKB-UniRule"/>
</dbReference>
<dbReference type="GO" id="GO:0020037">
    <property type="term" value="F:heme binding"/>
    <property type="evidence" value="ECO:0007669"/>
    <property type="project" value="InterPro"/>
</dbReference>
<dbReference type="GO" id="GO:0046872">
    <property type="term" value="F:metal ion binding"/>
    <property type="evidence" value="ECO:0007669"/>
    <property type="project" value="UniProtKB-KW"/>
</dbReference>
<dbReference type="GO" id="GO:0070301">
    <property type="term" value="P:cellular response to hydrogen peroxide"/>
    <property type="evidence" value="ECO:0007669"/>
    <property type="project" value="TreeGrafter"/>
</dbReference>
<dbReference type="GO" id="GO:0042744">
    <property type="term" value="P:hydrogen peroxide catabolic process"/>
    <property type="evidence" value="ECO:0007669"/>
    <property type="project" value="UniProtKB-KW"/>
</dbReference>
<dbReference type="CDD" id="cd00649">
    <property type="entry name" value="catalase_peroxidase_1"/>
    <property type="match status" value="1"/>
</dbReference>
<dbReference type="CDD" id="cd08200">
    <property type="entry name" value="catalase_peroxidase_2"/>
    <property type="match status" value="1"/>
</dbReference>
<dbReference type="FunFam" id="1.10.420.10:FF:000002">
    <property type="entry name" value="Catalase-peroxidase"/>
    <property type="match status" value="1"/>
</dbReference>
<dbReference type="FunFam" id="1.10.420.10:FF:000004">
    <property type="entry name" value="Catalase-peroxidase"/>
    <property type="match status" value="1"/>
</dbReference>
<dbReference type="FunFam" id="1.10.520.10:FF:000002">
    <property type="entry name" value="Catalase-peroxidase"/>
    <property type="match status" value="1"/>
</dbReference>
<dbReference type="FunFam" id="1.10.520.10:FF:000004">
    <property type="entry name" value="Catalase-peroxidase"/>
    <property type="match status" value="1"/>
</dbReference>
<dbReference type="Gene3D" id="1.10.520.10">
    <property type="match status" value="2"/>
</dbReference>
<dbReference type="Gene3D" id="1.10.420.10">
    <property type="entry name" value="Peroxidase, domain 2"/>
    <property type="match status" value="2"/>
</dbReference>
<dbReference type="HAMAP" id="MF_01961">
    <property type="entry name" value="Catal_peroxid"/>
    <property type="match status" value="1"/>
</dbReference>
<dbReference type="InterPro" id="IPR000763">
    <property type="entry name" value="Catalase_peroxidase"/>
</dbReference>
<dbReference type="InterPro" id="IPR002016">
    <property type="entry name" value="Haem_peroxidase"/>
</dbReference>
<dbReference type="InterPro" id="IPR010255">
    <property type="entry name" value="Haem_peroxidase_sf"/>
</dbReference>
<dbReference type="InterPro" id="IPR019794">
    <property type="entry name" value="Peroxidases_AS"/>
</dbReference>
<dbReference type="InterPro" id="IPR019793">
    <property type="entry name" value="Peroxidases_heam-ligand_BS"/>
</dbReference>
<dbReference type="NCBIfam" id="TIGR00198">
    <property type="entry name" value="cat_per_HPI"/>
    <property type="match status" value="1"/>
</dbReference>
<dbReference type="NCBIfam" id="NF011635">
    <property type="entry name" value="PRK15061.1"/>
    <property type="match status" value="1"/>
</dbReference>
<dbReference type="PANTHER" id="PTHR30555:SF0">
    <property type="entry name" value="CATALASE-PEROXIDASE"/>
    <property type="match status" value="1"/>
</dbReference>
<dbReference type="PANTHER" id="PTHR30555">
    <property type="entry name" value="HYDROPEROXIDASE I, BIFUNCTIONAL CATALASE-PEROXIDASE"/>
    <property type="match status" value="1"/>
</dbReference>
<dbReference type="Pfam" id="PF00141">
    <property type="entry name" value="peroxidase"/>
    <property type="match status" value="2"/>
</dbReference>
<dbReference type="PRINTS" id="PR00460">
    <property type="entry name" value="BPEROXIDASE"/>
</dbReference>
<dbReference type="PRINTS" id="PR00458">
    <property type="entry name" value="PEROXIDASE"/>
</dbReference>
<dbReference type="SUPFAM" id="SSF48113">
    <property type="entry name" value="Heme-dependent peroxidases"/>
    <property type="match status" value="2"/>
</dbReference>
<dbReference type="PROSITE" id="PS00435">
    <property type="entry name" value="PEROXIDASE_1"/>
    <property type="match status" value="1"/>
</dbReference>
<dbReference type="PROSITE" id="PS00436">
    <property type="entry name" value="PEROXIDASE_2"/>
    <property type="match status" value="1"/>
</dbReference>
<dbReference type="PROSITE" id="PS50873">
    <property type="entry name" value="PEROXIDASE_4"/>
    <property type="match status" value="1"/>
</dbReference>
<comment type="function">
    <text evidence="1">Bifunctional enzyme with both catalase and broad-spectrum peroxidase activity.</text>
</comment>
<comment type="catalytic activity">
    <reaction evidence="1">
        <text>H2O2 + AH2 = A + 2 H2O</text>
        <dbReference type="Rhea" id="RHEA:30275"/>
        <dbReference type="ChEBI" id="CHEBI:13193"/>
        <dbReference type="ChEBI" id="CHEBI:15377"/>
        <dbReference type="ChEBI" id="CHEBI:16240"/>
        <dbReference type="ChEBI" id="CHEBI:17499"/>
        <dbReference type="EC" id="1.11.1.21"/>
    </reaction>
</comment>
<comment type="catalytic activity">
    <reaction evidence="1">
        <text>2 H2O2 = O2 + 2 H2O</text>
        <dbReference type="Rhea" id="RHEA:20309"/>
        <dbReference type="ChEBI" id="CHEBI:15377"/>
        <dbReference type="ChEBI" id="CHEBI:15379"/>
        <dbReference type="ChEBI" id="CHEBI:16240"/>
        <dbReference type="EC" id="1.11.1.21"/>
    </reaction>
</comment>
<comment type="cofactor">
    <cofactor evidence="1">
        <name>heme b</name>
        <dbReference type="ChEBI" id="CHEBI:60344"/>
    </cofactor>
    <text evidence="1">Binds 1 heme b (iron(II)-protoporphyrin IX) group per dimer.</text>
</comment>
<comment type="subunit">
    <text evidence="1">Homodimer or homotetramer.</text>
</comment>
<comment type="PTM">
    <text evidence="1">Formation of the three residue Trp-Tyr-Met cross-link is important for the catalase, but not the peroxidase activity of the enzyme.</text>
</comment>
<comment type="similarity">
    <text evidence="1">Belongs to the peroxidase family. Peroxidase/catalase subfamily.</text>
</comment>
<reference key="1">
    <citation type="submission" date="2008-02" db="EMBL/GenBank/DDBJ databases">
        <title>Complete sequence of chromosome 1 of Burkholderia cenocepacia MC0-3.</title>
        <authorList>
            <person name="Copeland A."/>
            <person name="Lucas S."/>
            <person name="Lapidus A."/>
            <person name="Barry K."/>
            <person name="Bruce D."/>
            <person name="Goodwin L."/>
            <person name="Glavina del Rio T."/>
            <person name="Dalin E."/>
            <person name="Tice H."/>
            <person name="Pitluck S."/>
            <person name="Chain P."/>
            <person name="Malfatti S."/>
            <person name="Shin M."/>
            <person name="Vergez L."/>
            <person name="Schmutz J."/>
            <person name="Larimer F."/>
            <person name="Land M."/>
            <person name="Hauser L."/>
            <person name="Kyrpides N."/>
            <person name="Mikhailova N."/>
            <person name="Tiedje J."/>
            <person name="Richardson P."/>
        </authorList>
    </citation>
    <scope>NUCLEOTIDE SEQUENCE [LARGE SCALE GENOMIC DNA]</scope>
    <source>
        <strain>MC0-3</strain>
    </source>
</reference>
<protein>
    <recommendedName>
        <fullName evidence="1">Catalase-peroxidase 1</fullName>
        <shortName evidence="1">CP 1</shortName>
        <ecNumber evidence="1">1.11.1.21</ecNumber>
    </recommendedName>
    <alternativeName>
        <fullName evidence="1">Peroxidase/catalase 1</fullName>
    </alternativeName>
</protein>
<organism>
    <name type="scientific">Burkholderia orbicola (strain MC0-3)</name>
    <dbReference type="NCBI Taxonomy" id="406425"/>
    <lineage>
        <taxon>Bacteria</taxon>
        <taxon>Pseudomonadati</taxon>
        <taxon>Pseudomonadota</taxon>
        <taxon>Betaproteobacteria</taxon>
        <taxon>Burkholderiales</taxon>
        <taxon>Burkholderiaceae</taxon>
        <taxon>Burkholderia</taxon>
        <taxon>Burkholderia cepacia complex</taxon>
        <taxon>Burkholderia orbicola</taxon>
    </lineage>
</organism>
<name>KATG1_BURO0</name>
<accession>B1JVZ2</accession>
<keyword id="KW-0349">Heme</keyword>
<keyword id="KW-0376">Hydrogen peroxide</keyword>
<keyword id="KW-0408">Iron</keyword>
<keyword id="KW-0479">Metal-binding</keyword>
<keyword id="KW-0560">Oxidoreductase</keyword>
<keyword id="KW-0575">Peroxidase</keyword>
<gene>
    <name evidence="1" type="primary">katG1</name>
    <name type="ordered locus">Bcenmc03_0694</name>
</gene>
<sequence>MSNETKCPFNHTAGSGTTNKDWWPNQLNLNVLHRHSALSDPMDPDFDYAEAFKKLDLAAVKQDLHALMTTSQDWWPADFGHYGGLFVRMAWHSAGTYRTADGRGGAGGGQQRFAPLNSWPDNVSLDKARRLLWPIKQKYGRNISWADLLILTGNVALESMGFKTFGYAGGRADTWEPDDVYWGSEKIWLELSGGPNSRYTGKRELESPLAAVQMGLIYVNPEGPDGNPDPVAAAHDIRETFARMAMNDEETVALIAGGHTFGKTHGAGPASNVGPEPEAAGLEEQGLGWKSTFGTGKGKDTITSGLEVTWTSTPTKWSNDFFKHLFSYEWELTKSPAGAHQWVAKDAGEVIPDAYDASKKHRPTMLTTDLSLRFDPAYEKISRRFYENPAEFADAFARAWFKLTHRDMGPRARYLGPEVPAEHLLWQDPIPAVDHPLIDAADVAALKAKVLATGLSVSQLVSTAWASAATFRGSDKRGGANGARIRLAPQKDWEVNQPVALAAVLETLEGVQKAFNDAQTDGKKVSLADLIVLAGAAGVEQAAKNAGISISVPFAPGRMDASQEETDVDAMAVLEPVADGFRNYLKSAYKTPAEALLVDKAQLLTLTAPEMTVLVGGLRVLGANVGDSKHGVFTDRPGTLSNDFFANLLDMGTEWKPVSAANDVFEGRDRATGAVKWTGTRVDLIFGSHSQLRALAEVYGSADAQEKFVRDFVAAWNKVMNLDRFDLA</sequence>
<proteinExistence type="inferred from homology"/>
<evidence type="ECO:0000255" key="1">
    <source>
        <dbReference type="HAMAP-Rule" id="MF_01961"/>
    </source>
</evidence>
<feature type="chain" id="PRO_0000354736" description="Catalase-peroxidase 1">
    <location>
        <begin position="1"/>
        <end position="728"/>
    </location>
</feature>
<feature type="active site" description="Proton acceptor" evidence="1">
    <location>
        <position position="92"/>
    </location>
</feature>
<feature type="binding site" description="axial binding residue" evidence="1">
    <location>
        <position position="259"/>
    </location>
    <ligand>
        <name>heme b</name>
        <dbReference type="ChEBI" id="CHEBI:60344"/>
    </ligand>
    <ligandPart>
        <name>Fe</name>
        <dbReference type="ChEBI" id="CHEBI:18248"/>
    </ligandPart>
</feature>
<feature type="site" description="Transition state stabilizer" evidence="1">
    <location>
        <position position="88"/>
    </location>
</feature>
<feature type="cross-link" description="Tryptophyl-tyrosyl-methioninium (Trp-Tyr) (with M-244)" evidence="1">
    <location>
        <begin position="91"/>
        <end position="218"/>
    </location>
</feature>
<feature type="cross-link" description="Tryptophyl-tyrosyl-methioninium (Tyr-Met) (with W-91)" evidence="1">
    <location>
        <begin position="218"/>
        <end position="244"/>
    </location>
</feature>